<evidence type="ECO:0000255" key="1">
    <source>
        <dbReference type="HAMAP-Rule" id="MF_00022"/>
    </source>
</evidence>
<accession>A9BM51</accession>
<proteinExistence type="inferred from homology"/>
<sequence length="468" mass="52622">MTQKVRTRFAPSPTGFIHLGNIRSALYPWAFARATGGDFILRIEDTDVERSTQASVDVIIEGMAWLQLDHDEGPFYQMQRMDRYKEVLAGLQASGHVYPCYMSVEELDALRERQMANKEKPRYDGTWRPEEGKVLPPVPEGVRPVLRFKTPQGGVVAWEDKCKGRIEFQNSELDDLVIARPDGTPTYNFCVCVDDMDMAITHVIRGDDHVNNTPRQIHIFEALGASVPVFAHLPTVLNEQGEKMSKRNGAKAVTQYRDEGYLPDAMVNYLARLGWSHGDDEIFSRAQFLEWFNLDHLGRSAGQFDEAKLRWVNAQHLKALDDAALAELVRPFVLKTGLDQALLDADDRLPRICALFKDRCETLVDLAGWVRLFYVDAFDRNAEDLAKHVTDVVAPALDAFAEGIASVEWSKEAIAALIKEVLKAQGLKMPQLAMPVRVLTLGTAHTPSVDAVLELLGREKILARLKNR</sequence>
<keyword id="KW-0030">Aminoacyl-tRNA synthetase</keyword>
<keyword id="KW-0067">ATP-binding</keyword>
<keyword id="KW-0963">Cytoplasm</keyword>
<keyword id="KW-0436">Ligase</keyword>
<keyword id="KW-0547">Nucleotide-binding</keyword>
<keyword id="KW-0648">Protein biosynthesis</keyword>
<keyword id="KW-1185">Reference proteome</keyword>
<organism>
    <name type="scientific">Delftia acidovorans (strain DSM 14801 / SPH-1)</name>
    <dbReference type="NCBI Taxonomy" id="398578"/>
    <lineage>
        <taxon>Bacteria</taxon>
        <taxon>Pseudomonadati</taxon>
        <taxon>Pseudomonadota</taxon>
        <taxon>Betaproteobacteria</taxon>
        <taxon>Burkholderiales</taxon>
        <taxon>Comamonadaceae</taxon>
        <taxon>Delftia</taxon>
    </lineage>
</organism>
<protein>
    <recommendedName>
        <fullName evidence="1">Glutamate--tRNA ligase</fullName>
        <ecNumber evidence="1">6.1.1.17</ecNumber>
    </recommendedName>
    <alternativeName>
        <fullName evidence="1">Glutamyl-tRNA synthetase</fullName>
        <shortName evidence="1">GluRS</shortName>
    </alternativeName>
</protein>
<name>SYE_DELAS</name>
<comment type="function">
    <text evidence="1">Catalyzes the attachment of glutamate to tRNA(Glu) in a two-step reaction: glutamate is first activated by ATP to form Glu-AMP and then transferred to the acceptor end of tRNA(Glu).</text>
</comment>
<comment type="catalytic activity">
    <reaction evidence="1">
        <text>tRNA(Glu) + L-glutamate + ATP = L-glutamyl-tRNA(Glu) + AMP + diphosphate</text>
        <dbReference type="Rhea" id="RHEA:23540"/>
        <dbReference type="Rhea" id="RHEA-COMP:9663"/>
        <dbReference type="Rhea" id="RHEA-COMP:9680"/>
        <dbReference type="ChEBI" id="CHEBI:29985"/>
        <dbReference type="ChEBI" id="CHEBI:30616"/>
        <dbReference type="ChEBI" id="CHEBI:33019"/>
        <dbReference type="ChEBI" id="CHEBI:78442"/>
        <dbReference type="ChEBI" id="CHEBI:78520"/>
        <dbReference type="ChEBI" id="CHEBI:456215"/>
        <dbReference type="EC" id="6.1.1.17"/>
    </reaction>
</comment>
<comment type="subunit">
    <text evidence="1">Monomer.</text>
</comment>
<comment type="subcellular location">
    <subcellularLocation>
        <location evidence="1">Cytoplasm</location>
    </subcellularLocation>
</comment>
<comment type="similarity">
    <text evidence="1">Belongs to the class-I aminoacyl-tRNA synthetase family. Glutamate--tRNA ligase type 1 subfamily.</text>
</comment>
<feature type="chain" id="PRO_1000090070" description="Glutamate--tRNA ligase">
    <location>
        <begin position="1"/>
        <end position="468"/>
    </location>
</feature>
<feature type="short sequence motif" description="'HIGH' region" evidence="1">
    <location>
        <begin position="11"/>
        <end position="21"/>
    </location>
</feature>
<feature type="short sequence motif" description="'KMSKS' region" evidence="1">
    <location>
        <begin position="243"/>
        <end position="247"/>
    </location>
</feature>
<feature type="binding site" evidence="1">
    <location>
        <position position="246"/>
    </location>
    <ligand>
        <name>ATP</name>
        <dbReference type="ChEBI" id="CHEBI:30616"/>
    </ligand>
</feature>
<gene>
    <name evidence="1" type="primary">gltX</name>
    <name type="ordered locus">Daci_4767</name>
</gene>
<reference key="1">
    <citation type="submission" date="2007-11" db="EMBL/GenBank/DDBJ databases">
        <title>Complete sequence of Delftia acidovorans DSM 14801 / SPH-1.</title>
        <authorList>
            <person name="Copeland A."/>
            <person name="Lucas S."/>
            <person name="Lapidus A."/>
            <person name="Barry K."/>
            <person name="Glavina del Rio T."/>
            <person name="Dalin E."/>
            <person name="Tice H."/>
            <person name="Pitluck S."/>
            <person name="Lowry S."/>
            <person name="Clum A."/>
            <person name="Schmutz J."/>
            <person name="Larimer F."/>
            <person name="Land M."/>
            <person name="Hauser L."/>
            <person name="Kyrpides N."/>
            <person name="Kim E."/>
            <person name="Schleheck D."/>
            <person name="Richardson P."/>
        </authorList>
    </citation>
    <scope>NUCLEOTIDE SEQUENCE [LARGE SCALE GENOMIC DNA]</scope>
    <source>
        <strain>DSM 14801 / SPH-1</strain>
    </source>
</reference>
<dbReference type="EC" id="6.1.1.17" evidence="1"/>
<dbReference type="EMBL" id="CP000884">
    <property type="protein sequence ID" value="ABX37396.1"/>
    <property type="molecule type" value="Genomic_DNA"/>
</dbReference>
<dbReference type="RefSeq" id="WP_012206566.1">
    <property type="nucleotide sequence ID" value="NC_010002.1"/>
</dbReference>
<dbReference type="SMR" id="A9BM51"/>
<dbReference type="STRING" id="398578.Daci_4767"/>
<dbReference type="GeneID" id="24118862"/>
<dbReference type="KEGG" id="dac:Daci_4767"/>
<dbReference type="eggNOG" id="COG0008">
    <property type="taxonomic scope" value="Bacteria"/>
</dbReference>
<dbReference type="HOGENOM" id="CLU_015768_6_1_4"/>
<dbReference type="Proteomes" id="UP000000784">
    <property type="component" value="Chromosome"/>
</dbReference>
<dbReference type="GO" id="GO:0005829">
    <property type="term" value="C:cytosol"/>
    <property type="evidence" value="ECO:0007669"/>
    <property type="project" value="TreeGrafter"/>
</dbReference>
<dbReference type="GO" id="GO:0005524">
    <property type="term" value="F:ATP binding"/>
    <property type="evidence" value="ECO:0007669"/>
    <property type="project" value="UniProtKB-UniRule"/>
</dbReference>
<dbReference type="GO" id="GO:0004818">
    <property type="term" value="F:glutamate-tRNA ligase activity"/>
    <property type="evidence" value="ECO:0007669"/>
    <property type="project" value="UniProtKB-UniRule"/>
</dbReference>
<dbReference type="GO" id="GO:0000049">
    <property type="term" value="F:tRNA binding"/>
    <property type="evidence" value="ECO:0007669"/>
    <property type="project" value="InterPro"/>
</dbReference>
<dbReference type="GO" id="GO:0008270">
    <property type="term" value="F:zinc ion binding"/>
    <property type="evidence" value="ECO:0007669"/>
    <property type="project" value="InterPro"/>
</dbReference>
<dbReference type="GO" id="GO:0006424">
    <property type="term" value="P:glutamyl-tRNA aminoacylation"/>
    <property type="evidence" value="ECO:0007669"/>
    <property type="project" value="UniProtKB-UniRule"/>
</dbReference>
<dbReference type="CDD" id="cd00808">
    <property type="entry name" value="GluRS_core"/>
    <property type="match status" value="1"/>
</dbReference>
<dbReference type="FunFam" id="3.40.50.620:FF:000007">
    <property type="entry name" value="Glutamate--tRNA ligase"/>
    <property type="match status" value="1"/>
</dbReference>
<dbReference type="Gene3D" id="1.10.10.350">
    <property type="match status" value="1"/>
</dbReference>
<dbReference type="Gene3D" id="1.10.8.70">
    <property type="entry name" value="Glutamate-tRNA synthetase, class I, anticodon-binding domain 1"/>
    <property type="match status" value="1"/>
</dbReference>
<dbReference type="Gene3D" id="3.40.50.620">
    <property type="entry name" value="HUPs"/>
    <property type="match status" value="1"/>
</dbReference>
<dbReference type="HAMAP" id="MF_00022">
    <property type="entry name" value="Glu_tRNA_synth_type1"/>
    <property type="match status" value="1"/>
</dbReference>
<dbReference type="InterPro" id="IPR045462">
    <property type="entry name" value="aa-tRNA-synth_I_cd-bd"/>
</dbReference>
<dbReference type="InterPro" id="IPR020751">
    <property type="entry name" value="aa-tRNA-synth_I_codon-bd_sub2"/>
</dbReference>
<dbReference type="InterPro" id="IPR001412">
    <property type="entry name" value="aa-tRNA-synth_I_CS"/>
</dbReference>
<dbReference type="InterPro" id="IPR008925">
    <property type="entry name" value="aa_tRNA-synth_I_cd-bd_sf"/>
</dbReference>
<dbReference type="InterPro" id="IPR004527">
    <property type="entry name" value="Glu-tRNA-ligase_bac/mito"/>
</dbReference>
<dbReference type="InterPro" id="IPR020752">
    <property type="entry name" value="Glu-tRNA-synth_I_codon-bd_sub1"/>
</dbReference>
<dbReference type="InterPro" id="IPR000924">
    <property type="entry name" value="Glu/Gln-tRNA-synth"/>
</dbReference>
<dbReference type="InterPro" id="IPR020058">
    <property type="entry name" value="Glu/Gln-tRNA-synth_Ib_cat-dom"/>
</dbReference>
<dbReference type="InterPro" id="IPR049940">
    <property type="entry name" value="GluQ/Sye"/>
</dbReference>
<dbReference type="InterPro" id="IPR033910">
    <property type="entry name" value="GluRS_core"/>
</dbReference>
<dbReference type="InterPro" id="IPR014729">
    <property type="entry name" value="Rossmann-like_a/b/a_fold"/>
</dbReference>
<dbReference type="NCBIfam" id="TIGR00464">
    <property type="entry name" value="gltX_bact"/>
    <property type="match status" value="1"/>
</dbReference>
<dbReference type="PANTHER" id="PTHR43311">
    <property type="entry name" value="GLUTAMATE--TRNA LIGASE"/>
    <property type="match status" value="1"/>
</dbReference>
<dbReference type="PANTHER" id="PTHR43311:SF2">
    <property type="entry name" value="GLUTAMATE--TRNA LIGASE, MITOCHONDRIAL-RELATED"/>
    <property type="match status" value="1"/>
</dbReference>
<dbReference type="Pfam" id="PF19269">
    <property type="entry name" value="Anticodon_2"/>
    <property type="match status" value="1"/>
</dbReference>
<dbReference type="Pfam" id="PF00749">
    <property type="entry name" value="tRNA-synt_1c"/>
    <property type="match status" value="1"/>
</dbReference>
<dbReference type="PRINTS" id="PR00987">
    <property type="entry name" value="TRNASYNTHGLU"/>
</dbReference>
<dbReference type="SUPFAM" id="SSF48163">
    <property type="entry name" value="An anticodon-binding domain of class I aminoacyl-tRNA synthetases"/>
    <property type="match status" value="1"/>
</dbReference>
<dbReference type="SUPFAM" id="SSF52374">
    <property type="entry name" value="Nucleotidylyl transferase"/>
    <property type="match status" value="1"/>
</dbReference>
<dbReference type="PROSITE" id="PS00178">
    <property type="entry name" value="AA_TRNA_LIGASE_I"/>
    <property type="match status" value="1"/>
</dbReference>